<reference key="1">
    <citation type="journal article" date="2004" name="Environ. Microbiol.">
        <title>The genome of Desulfotalea psychrophila, a sulfate-reducing bacterium from permanently cold Arctic sediments.</title>
        <authorList>
            <person name="Rabus R."/>
            <person name="Ruepp A."/>
            <person name="Frickey T."/>
            <person name="Rattei T."/>
            <person name="Fartmann B."/>
            <person name="Stark M."/>
            <person name="Bauer M."/>
            <person name="Zibat A."/>
            <person name="Lombardot T."/>
            <person name="Becker I."/>
            <person name="Amann J."/>
            <person name="Gellner K."/>
            <person name="Teeling H."/>
            <person name="Leuschner W.D."/>
            <person name="Gloeckner F.-O."/>
            <person name="Lupas A.N."/>
            <person name="Amann R."/>
            <person name="Klenk H.-P."/>
        </authorList>
    </citation>
    <scope>NUCLEOTIDE SEQUENCE [LARGE SCALE GENOMIC DNA]</scope>
    <source>
        <strain>DSM 12343 / LSv54</strain>
    </source>
</reference>
<keyword id="KW-0131">Cell cycle</keyword>
<keyword id="KW-0132">Cell division</keyword>
<keyword id="KW-0143">Chaperone</keyword>
<keyword id="KW-0963">Cytoplasm</keyword>
<keyword id="KW-0413">Isomerase</keyword>
<keyword id="KW-1185">Reference proteome</keyword>
<keyword id="KW-0697">Rotamase</keyword>
<evidence type="ECO:0000255" key="1">
    <source>
        <dbReference type="HAMAP-Rule" id="MF_00303"/>
    </source>
</evidence>
<evidence type="ECO:0000305" key="2"/>
<protein>
    <recommendedName>
        <fullName evidence="1">Trigger factor</fullName>
        <shortName evidence="1">TF</shortName>
        <ecNumber evidence="1">5.2.1.8</ecNumber>
    </recommendedName>
    <alternativeName>
        <fullName evidence="1">PPIase</fullName>
    </alternativeName>
</protein>
<proteinExistence type="inferred from homology"/>
<organism>
    <name type="scientific">Desulfotalea psychrophila (strain LSv54 / DSM 12343)</name>
    <dbReference type="NCBI Taxonomy" id="177439"/>
    <lineage>
        <taxon>Bacteria</taxon>
        <taxon>Pseudomonadati</taxon>
        <taxon>Thermodesulfobacteriota</taxon>
        <taxon>Desulfobulbia</taxon>
        <taxon>Desulfobulbales</taxon>
        <taxon>Desulfocapsaceae</taxon>
        <taxon>Desulfotalea</taxon>
    </lineage>
</organism>
<name>TIG_DESPS</name>
<gene>
    <name evidence="1" type="primary">tig</name>
    <name type="ordered locus">DP2539</name>
</gene>
<comment type="function">
    <text evidence="1">Involved in protein export. Acts as a chaperone by maintaining the newly synthesized protein in an open conformation. Functions as a peptidyl-prolyl cis-trans isomerase.</text>
</comment>
<comment type="catalytic activity">
    <reaction evidence="1">
        <text>[protein]-peptidylproline (omega=180) = [protein]-peptidylproline (omega=0)</text>
        <dbReference type="Rhea" id="RHEA:16237"/>
        <dbReference type="Rhea" id="RHEA-COMP:10747"/>
        <dbReference type="Rhea" id="RHEA-COMP:10748"/>
        <dbReference type="ChEBI" id="CHEBI:83833"/>
        <dbReference type="ChEBI" id="CHEBI:83834"/>
        <dbReference type="EC" id="5.2.1.8"/>
    </reaction>
</comment>
<comment type="subcellular location">
    <subcellularLocation>
        <location>Cytoplasm</location>
    </subcellularLocation>
    <text evidence="1">About half TF is bound to the ribosome near the polypeptide exit tunnel while the other half is free in the cytoplasm.</text>
</comment>
<comment type="domain">
    <text evidence="1">Consists of 3 domains; the N-terminus binds the ribosome, the middle domain has PPIase activity, while the C-terminus has intrinsic chaperone activity on its own.</text>
</comment>
<comment type="similarity">
    <text evidence="1">Belongs to the FKBP-type PPIase family. Tig subfamily.</text>
</comment>
<comment type="sequence caution" evidence="2">
    <conflict type="erroneous initiation">
        <sequence resource="EMBL-CDS" id="CAG37268"/>
    </conflict>
</comment>
<accession>Q6AK58</accession>
<sequence>MDIKVEEVSKLTRKVIVTLPAGDVQPKIEAAYNKLKKEVKIKGFRRGKVPSAIIVKNYKDQVEAELSEKLVQENYFNAVEKEGLDPVTHPEIQVVKYNEDGSFTFEAHVDVRPDFELGNYKGLEIEKPAVAVADEDIDAEIAEMQKKAAALHVVDRPAVDGDMVTVDFQGFENGEALAQVKSDDHQVDLGAGSMGKDFEAKLVGMSKGEVADHQITFPENHPNVIIKGKTIDFKLSVKDVKERILADLDDEFAKDAGEEFNSMDELKASIRARRIKKLEESAEGVISDRLMQKLLEGYEFEVPTRLVAHESEQMIKQTEQQLQQSGLTLEAAGLSKEKLVEENVEVAAQRVRGDFLLKKIAEVEDIKVADEDMDRGFKRIGDMYNMTVAQVKEFFQSRDDLLPFMNELLNEKILAFLRSEAVMVEEKAVEATDVQKEGASE</sequence>
<dbReference type="EC" id="5.2.1.8" evidence="1"/>
<dbReference type="EMBL" id="CR522870">
    <property type="protein sequence ID" value="CAG37268.1"/>
    <property type="status" value="ALT_INIT"/>
    <property type="molecule type" value="Genomic_DNA"/>
</dbReference>
<dbReference type="RefSeq" id="WP_041278006.1">
    <property type="nucleotide sequence ID" value="NC_006138.1"/>
</dbReference>
<dbReference type="SMR" id="Q6AK58"/>
<dbReference type="STRING" id="177439.DP2539"/>
<dbReference type="KEGG" id="dps:DP2539"/>
<dbReference type="eggNOG" id="COG0544">
    <property type="taxonomic scope" value="Bacteria"/>
</dbReference>
<dbReference type="HOGENOM" id="CLU_033058_3_2_7"/>
<dbReference type="OrthoDB" id="9767721at2"/>
<dbReference type="Proteomes" id="UP000000602">
    <property type="component" value="Chromosome"/>
</dbReference>
<dbReference type="GO" id="GO:0005737">
    <property type="term" value="C:cytoplasm"/>
    <property type="evidence" value="ECO:0007669"/>
    <property type="project" value="UniProtKB-SubCell"/>
</dbReference>
<dbReference type="GO" id="GO:0003755">
    <property type="term" value="F:peptidyl-prolyl cis-trans isomerase activity"/>
    <property type="evidence" value="ECO:0007669"/>
    <property type="project" value="UniProtKB-UniRule"/>
</dbReference>
<dbReference type="GO" id="GO:0044183">
    <property type="term" value="F:protein folding chaperone"/>
    <property type="evidence" value="ECO:0007669"/>
    <property type="project" value="TreeGrafter"/>
</dbReference>
<dbReference type="GO" id="GO:0043022">
    <property type="term" value="F:ribosome binding"/>
    <property type="evidence" value="ECO:0007669"/>
    <property type="project" value="TreeGrafter"/>
</dbReference>
<dbReference type="GO" id="GO:0051083">
    <property type="term" value="P:'de novo' cotranslational protein folding"/>
    <property type="evidence" value="ECO:0007669"/>
    <property type="project" value="TreeGrafter"/>
</dbReference>
<dbReference type="GO" id="GO:0051301">
    <property type="term" value="P:cell division"/>
    <property type="evidence" value="ECO:0007669"/>
    <property type="project" value="UniProtKB-KW"/>
</dbReference>
<dbReference type="GO" id="GO:0061077">
    <property type="term" value="P:chaperone-mediated protein folding"/>
    <property type="evidence" value="ECO:0007669"/>
    <property type="project" value="TreeGrafter"/>
</dbReference>
<dbReference type="GO" id="GO:0015031">
    <property type="term" value="P:protein transport"/>
    <property type="evidence" value="ECO:0007669"/>
    <property type="project" value="UniProtKB-UniRule"/>
</dbReference>
<dbReference type="GO" id="GO:0043335">
    <property type="term" value="P:protein unfolding"/>
    <property type="evidence" value="ECO:0007669"/>
    <property type="project" value="TreeGrafter"/>
</dbReference>
<dbReference type="Gene3D" id="3.10.50.40">
    <property type="match status" value="1"/>
</dbReference>
<dbReference type="Gene3D" id="3.30.70.1050">
    <property type="entry name" value="Trigger factor ribosome-binding domain"/>
    <property type="match status" value="1"/>
</dbReference>
<dbReference type="Gene3D" id="1.10.3120.10">
    <property type="entry name" value="Trigger factor, C-terminal domain"/>
    <property type="match status" value="1"/>
</dbReference>
<dbReference type="HAMAP" id="MF_00303">
    <property type="entry name" value="Trigger_factor_Tig"/>
    <property type="match status" value="1"/>
</dbReference>
<dbReference type="InterPro" id="IPR046357">
    <property type="entry name" value="PPIase_dom_sf"/>
</dbReference>
<dbReference type="InterPro" id="IPR001179">
    <property type="entry name" value="PPIase_FKBP_dom"/>
</dbReference>
<dbReference type="InterPro" id="IPR005215">
    <property type="entry name" value="Trig_fac"/>
</dbReference>
<dbReference type="InterPro" id="IPR008880">
    <property type="entry name" value="Trigger_fac_C"/>
</dbReference>
<dbReference type="InterPro" id="IPR037041">
    <property type="entry name" value="Trigger_fac_C_sf"/>
</dbReference>
<dbReference type="InterPro" id="IPR008881">
    <property type="entry name" value="Trigger_fac_ribosome-bd_bac"/>
</dbReference>
<dbReference type="InterPro" id="IPR036611">
    <property type="entry name" value="Trigger_fac_ribosome-bd_sf"/>
</dbReference>
<dbReference type="InterPro" id="IPR027304">
    <property type="entry name" value="Trigger_fact/SurA_dom_sf"/>
</dbReference>
<dbReference type="NCBIfam" id="TIGR00115">
    <property type="entry name" value="tig"/>
    <property type="match status" value="1"/>
</dbReference>
<dbReference type="PANTHER" id="PTHR30560">
    <property type="entry name" value="TRIGGER FACTOR CHAPERONE AND PEPTIDYL-PROLYL CIS/TRANS ISOMERASE"/>
    <property type="match status" value="1"/>
</dbReference>
<dbReference type="PANTHER" id="PTHR30560:SF3">
    <property type="entry name" value="TRIGGER FACTOR-LIKE PROTEIN TIG, CHLOROPLASTIC"/>
    <property type="match status" value="1"/>
</dbReference>
<dbReference type="Pfam" id="PF00254">
    <property type="entry name" value="FKBP_C"/>
    <property type="match status" value="1"/>
</dbReference>
<dbReference type="Pfam" id="PF05698">
    <property type="entry name" value="Trigger_C"/>
    <property type="match status" value="1"/>
</dbReference>
<dbReference type="Pfam" id="PF05697">
    <property type="entry name" value="Trigger_N"/>
    <property type="match status" value="1"/>
</dbReference>
<dbReference type="PIRSF" id="PIRSF003095">
    <property type="entry name" value="Trigger_factor"/>
    <property type="match status" value="1"/>
</dbReference>
<dbReference type="SUPFAM" id="SSF54534">
    <property type="entry name" value="FKBP-like"/>
    <property type="match status" value="1"/>
</dbReference>
<dbReference type="SUPFAM" id="SSF109998">
    <property type="entry name" value="Triger factor/SurA peptide-binding domain-like"/>
    <property type="match status" value="1"/>
</dbReference>
<dbReference type="SUPFAM" id="SSF102735">
    <property type="entry name" value="Trigger factor ribosome-binding domain"/>
    <property type="match status" value="1"/>
</dbReference>
<feature type="chain" id="PRO_0000179345" description="Trigger factor">
    <location>
        <begin position="1"/>
        <end position="441"/>
    </location>
</feature>
<feature type="domain" description="PPIase FKBP-type" evidence="1">
    <location>
        <begin position="161"/>
        <end position="246"/>
    </location>
</feature>